<proteinExistence type="inferred from homology"/>
<evidence type="ECO:0000255" key="1">
    <source>
        <dbReference type="HAMAP-Rule" id="MF_01959"/>
    </source>
</evidence>
<evidence type="ECO:0000256" key="2">
    <source>
        <dbReference type="SAM" id="MobiDB-lite"/>
    </source>
</evidence>
<feature type="chain" id="PRO_1000070805" description="Cytochrome c-type biogenesis protein CcmE">
    <location>
        <begin position="1"/>
        <end position="170"/>
    </location>
</feature>
<feature type="topological domain" description="Cytoplasmic" evidence="1">
    <location>
        <begin position="1"/>
        <end position="7"/>
    </location>
</feature>
<feature type="transmembrane region" description="Helical; Signal-anchor for type II membrane protein" evidence="1">
    <location>
        <begin position="8"/>
        <end position="28"/>
    </location>
</feature>
<feature type="topological domain" description="Periplasmic" evidence="1">
    <location>
        <begin position="29"/>
        <end position="170"/>
    </location>
</feature>
<feature type="region of interest" description="Disordered" evidence="2">
    <location>
        <begin position="137"/>
        <end position="170"/>
    </location>
</feature>
<feature type="compositionally biased region" description="Basic and acidic residues" evidence="2">
    <location>
        <begin position="137"/>
        <end position="146"/>
    </location>
</feature>
<feature type="binding site" description="covalent" evidence="1">
    <location>
        <position position="122"/>
    </location>
    <ligand>
        <name>heme</name>
        <dbReference type="ChEBI" id="CHEBI:30413"/>
    </ligand>
</feature>
<feature type="binding site" description="axial binding residue" evidence="1">
    <location>
        <position position="126"/>
    </location>
    <ligand>
        <name>heme</name>
        <dbReference type="ChEBI" id="CHEBI:30413"/>
    </ligand>
    <ligandPart>
        <name>Fe</name>
        <dbReference type="ChEBI" id="CHEBI:18248"/>
    </ligandPart>
</feature>
<gene>
    <name evidence="1" type="primary">ccmE</name>
    <name evidence="1" type="synonym">cycJ</name>
    <name type="ordered locus">BBta_3072</name>
</gene>
<sequence>MTRKQRRLTIIGGALFVLAVAAGLVLNALRDSIVFFSTPTMVAEKHIGPGKRFRLGGLVQPGSLKRGDDLAVTFEVADGGAKLPVAYKGILPDLFREGQGVVAEGALDAAGVFKADTVLAKHDETYMPKEVADTLKKQGHWKDDYGKPQAAKPGPVSMREGEKTAAGATQ</sequence>
<dbReference type="EMBL" id="CP000494">
    <property type="protein sequence ID" value="ABQ35191.1"/>
    <property type="molecule type" value="Genomic_DNA"/>
</dbReference>
<dbReference type="RefSeq" id="WP_012043210.1">
    <property type="nucleotide sequence ID" value="NC_009485.1"/>
</dbReference>
<dbReference type="SMR" id="A5EG97"/>
<dbReference type="STRING" id="288000.BBta_3072"/>
<dbReference type="KEGG" id="bbt:BBta_3072"/>
<dbReference type="eggNOG" id="COG2332">
    <property type="taxonomic scope" value="Bacteria"/>
</dbReference>
<dbReference type="HOGENOM" id="CLU_079503_1_1_5"/>
<dbReference type="OrthoDB" id="9793584at2"/>
<dbReference type="Proteomes" id="UP000000246">
    <property type="component" value="Chromosome"/>
</dbReference>
<dbReference type="GO" id="GO:0005886">
    <property type="term" value="C:plasma membrane"/>
    <property type="evidence" value="ECO:0007669"/>
    <property type="project" value="UniProtKB-SubCell"/>
</dbReference>
<dbReference type="GO" id="GO:0020037">
    <property type="term" value="F:heme binding"/>
    <property type="evidence" value="ECO:0007669"/>
    <property type="project" value="InterPro"/>
</dbReference>
<dbReference type="GO" id="GO:0046872">
    <property type="term" value="F:metal ion binding"/>
    <property type="evidence" value="ECO:0007669"/>
    <property type="project" value="UniProtKB-KW"/>
</dbReference>
<dbReference type="GO" id="GO:0017004">
    <property type="term" value="P:cytochrome complex assembly"/>
    <property type="evidence" value="ECO:0007669"/>
    <property type="project" value="UniProtKB-KW"/>
</dbReference>
<dbReference type="FunFam" id="2.40.50.140:FF:000104">
    <property type="entry name" value="Cytochrome c-type biogenesis protein CcmE"/>
    <property type="match status" value="1"/>
</dbReference>
<dbReference type="Gene3D" id="2.40.50.140">
    <property type="entry name" value="Nucleic acid-binding proteins"/>
    <property type="match status" value="1"/>
</dbReference>
<dbReference type="HAMAP" id="MF_01959">
    <property type="entry name" value="CcmE"/>
    <property type="match status" value="1"/>
</dbReference>
<dbReference type="InterPro" id="IPR004329">
    <property type="entry name" value="CcmE"/>
</dbReference>
<dbReference type="InterPro" id="IPR036127">
    <property type="entry name" value="CcmE-like_sf"/>
</dbReference>
<dbReference type="InterPro" id="IPR012340">
    <property type="entry name" value="NA-bd_OB-fold"/>
</dbReference>
<dbReference type="NCBIfam" id="NF009727">
    <property type="entry name" value="PRK13254.1-1"/>
    <property type="match status" value="1"/>
</dbReference>
<dbReference type="NCBIfam" id="NF009729">
    <property type="entry name" value="PRK13254.1-3"/>
    <property type="match status" value="1"/>
</dbReference>
<dbReference type="NCBIfam" id="NF009731">
    <property type="entry name" value="PRK13254.1-5"/>
    <property type="match status" value="1"/>
</dbReference>
<dbReference type="PANTHER" id="PTHR34128">
    <property type="entry name" value="CYTOCHROME C-TYPE BIOGENESIS PROTEIN CCME HOMOLOG, MITOCHONDRIAL"/>
    <property type="match status" value="1"/>
</dbReference>
<dbReference type="PANTHER" id="PTHR34128:SF2">
    <property type="entry name" value="CYTOCHROME C-TYPE BIOGENESIS PROTEIN CCME HOMOLOG, MITOCHONDRIAL"/>
    <property type="match status" value="1"/>
</dbReference>
<dbReference type="Pfam" id="PF03100">
    <property type="entry name" value="CcmE"/>
    <property type="match status" value="1"/>
</dbReference>
<dbReference type="SUPFAM" id="SSF82093">
    <property type="entry name" value="Heme chaperone CcmE"/>
    <property type="match status" value="1"/>
</dbReference>
<accession>A5EG97</accession>
<name>CCME_BRASB</name>
<keyword id="KW-0997">Cell inner membrane</keyword>
<keyword id="KW-1003">Cell membrane</keyword>
<keyword id="KW-0201">Cytochrome c-type biogenesis</keyword>
<keyword id="KW-0349">Heme</keyword>
<keyword id="KW-0408">Iron</keyword>
<keyword id="KW-0472">Membrane</keyword>
<keyword id="KW-0479">Metal-binding</keyword>
<keyword id="KW-1185">Reference proteome</keyword>
<keyword id="KW-0735">Signal-anchor</keyword>
<keyword id="KW-0812">Transmembrane</keyword>
<keyword id="KW-1133">Transmembrane helix</keyword>
<protein>
    <recommendedName>
        <fullName evidence="1">Cytochrome c-type biogenesis protein CcmE</fullName>
    </recommendedName>
    <alternativeName>
        <fullName evidence="1">Cytochrome c maturation protein E</fullName>
    </alternativeName>
    <alternativeName>
        <fullName evidence="1">Heme chaperone CcmE</fullName>
    </alternativeName>
</protein>
<reference key="1">
    <citation type="journal article" date="2007" name="Science">
        <title>Legumes symbioses: absence of nod genes in photosynthetic bradyrhizobia.</title>
        <authorList>
            <person name="Giraud E."/>
            <person name="Moulin L."/>
            <person name="Vallenet D."/>
            <person name="Barbe V."/>
            <person name="Cytryn E."/>
            <person name="Avarre J.-C."/>
            <person name="Jaubert M."/>
            <person name="Simon D."/>
            <person name="Cartieaux F."/>
            <person name="Prin Y."/>
            <person name="Bena G."/>
            <person name="Hannibal L."/>
            <person name="Fardoux J."/>
            <person name="Kojadinovic M."/>
            <person name="Vuillet L."/>
            <person name="Lajus A."/>
            <person name="Cruveiller S."/>
            <person name="Rouy Z."/>
            <person name="Mangenot S."/>
            <person name="Segurens B."/>
            <person name="Dossat C."/>
            <person name="Franck W.L."/>
            <person name="Chang W.-S."/>
            <person name="Saunders E."/>
            <person name="Bruce D."/>
            <person name="Richardson P."/>
            <person name="Normand P."/>
            <person name="Dreyfus B."/>
            <person name="Pignol D."/>
            <person name="Stacey G."/>
            <person name="Emerich D."/>
            <person name="Vermeglio A."/>
            <person name="Medigue C."/>
            <person name="Sadowsky M."/>
        </authorList>
    </citation>
    <scope>NUCLEOTIDE SEQUENCE [LARGE SCALE GENOMIC DNA]</scope>
    <source>
        <strain>BTAi1 / ATCC BAA-1182</strain>
    </source>
</reference>
<organism>
    <name type="scientific">Bradyrhizobium sp. (strain BTAi1 / ATCC BAA-1182)</name>
    <dbReference type="NCBI Taxonomy" id="288000"/>
    <lineage>
        <taxon>Bacteria</taxon>
        <taxon>Pseudomonadati</taxon>
        <taxon>Pseudomonadota</taxon>
        <taxon>Alphaproteobacteria</taxon>
        <taxon>Hyphomicrobiales</taxon>
        <taxon>Nitrobacteraceae</taxon>
        <taxon>Bradyrhizobium</taxon>
    </lineage>
</organism>
<comment type="function">
    <text evidence="1">Heme chaperone required for the biogenesis of c-type cytochromes. Transiently binds heme delivered by CcmC and transfers the heme to apo-cytochromes in a process facilitated by CcmF and CcmH.</text>
</comment>
<comment type="subcellular location">
    <subcellularLocation>
        <location evidence="1">Cell inner membrane</location>
        <topology evidence="1">Single-pass type II membrane protein</topology>
        <orientation evidence="1">Periplasmic side</orientation>
    </subcellularLocation>
</comment>
<comment type="similarity">
    <text evidence="1">Belongs to the CcmE/CycJ family.</text>
</comment>